<proteinExistence type="inferred from homology"/>
<keyword id="KW-1185">Reference proteome</keyword>
<keyword id="KW-0687">Ribonucleoprotein</keyword>
<keyword id="KW-0689">Ribosomal protein</keyword>
<keyword id="KW-0694">RNA-binding</keyword>
<keyword id="KW-0699">rRNA-binding</keyword>
<keyword id="KW-0820">tRNA-binding</keyword>
<organism>
    <name type="scientific">Acidovorax ebreus (strain TPSY)</name>
    <name type="common">Diaphorobacter sp. (strain TPSY)</name>
    <dbReference type="NCBI Taxonomy" id="535289"/>
    <lineage>
        <taxon>Bacteria</taxon>
        <taxon>Pseudomonadati</taxon>
        <taxon>Pseudomonadota</taxon>
        <taxon>Betaproteobacteria</taxon>
        <taxon>Burkholderiales</taxon>
        <taxon>Comamonadaceae</taxon>
        <taxon>Diaphorobacter</taxon>
    </lineage>
</organism>
<protein>
    <recommendedName>
        <fullName evidence="1">Large ribosomal subunit protein uL16</fullName>
    </recommendedName>
    <alternativeName>
        <fullName evidence="3">50S ribosomal protein L16</fullName>
    </alternativeName>
</protein>
<gene>
    <name evidence="1" type="primary">rplP</name>
    <name type="ordered locus">Dtpsy_0280</name>
</gene>
<dbReference type="EMBL" id="CP001392">
    <property type="protein sequence ID" value="ACM31764.1"/>
    <property type="molecule type" value="Genomic_DNA"/>
</dbReference>
<dbReference type="RefSeq" id="WP_011803749.1">
    <property type="nucleotide sequence ID" value="NC_011992.1"/>
</dbReference>
<dbReference type="SMR" id="B9MB80"/>
<dbReference type="GeneID" id="84683205"/>
<dbReference type="KEGG" id="dia:Dtpsy_0280"/>
<dbReference type="eggNOG" id="COG0197">
    <property type="taxonomic scope" value="Bacteria"/>
</dbReference>
<dbReference type="HOGENOM" id="CLU_078858_2_1_4"/>
<dbReference type="Proteomes" id="UP000000450">
    <property type="component" value="Chromosome"/>
</dbReference>
<dbReference type="GO" id="GO:0022625">
    <property type="term" value="C:cytosolic large ribosomal subunit"/>
    <property type="evidence" value="ECO:0007669"/>
    <property type="project" value="TreeGrafter"/>
</dbReference>
<dbReference type="GO" id="GO:0019843">
    <property type="term" value="F:rRNA binding"/>
    <property type="evidence" value="ECO:0007669"/>
    <property type="project" value="UniProtKB-UniRule"/>
</dbReference>
<dbReference type="GO" id="GO:0003735">
    <property type="term" value="F:structural constituent of ribosome"/>
    <property type="evidence" value="ECO:0007669"/>
    <property type="project" value="InterPro"/>
</dbReference>
<dbReference type="GO" id="GO:0000049">
    <property type="term" value="F:tRNA binding"/>
    <property type="evidence" value="ECO:0007669"/>
    <property type="project" value="UniProtKB-KW"/>
</dbReference>
<dbReference type="GO" id="GO:0006412">
    <property type="term" value="P:translation"/>
    <property type="evidence" value="ECO:0007669"/>
    <property type="project" value="UniProtKB-UniRule"/>
</dbReference>
<dbReference type="CDD" id="cd01433">
    <property type="entry name" value="Ribosomal_L16_L10e"/>
    <property type="match status" value="1"/>
</dbReference>
<dbReference type="FunFam" id="3.90.1170.10:FF:000001">
    <property type="entry name" value="50S ribosomal protein L16"/>
    <property type="match status" value="1"/>
</dbReference>
<dbReference type="Gene3D" id="3.90.1170.10">
    <property type="entry name" value="Ribosomal protein L10e/L16"/>
    <property type="match status" value="1"/>
</dbReference>
<dbReference type="HAMAP" id="MF_01342">
    <property type="entry name" value="Ribosomal_uL16"/>
    <property type="match status" value="1"/>
</dbReference>
<dbReference type="InterPro" id="IPR047873">
    <property type="entry name" value="Ribosomal_uL16"/>
</dbReference>
<dbReference type="InterPro" id="IPR000114">
    <property type="entry name" value="Ribosomal_uL16_bact-type"/>
</dbReference>
<dbReference type="InterPro" id="IPR020798">
    <property type="entry name" value="Ribosomal_uL16_CS"/>
</dbReference>
<dbReference type="InterPro" id="IPR016180">
    <property type="entry name" value="Ribosomal_uL16_dom"/>
</dbReference>
<dbReference type="InterPro" id="IPR036920">
    <property type="entry name" value="Ribosomal_uL16_sf"/>
</dbReference>
<dbReference type="NCBIfam" id="TIGR01164">
    <property type="entry name" value="rplP_bact"/>
    <property type="match status" value="1"/>
</dbReference>
<dbReference type="PANTHER" id="PTHR12220">
    <property type="entry name" value="50S/60S RIBOSOMAL PROTEIN L16"/>
    <property type="match status" value="1"/>
</dbReference>
<dbReference type="PANTHER" id="PTHR12220:SF13">
    <property type="entry name" value="LARGE RIBOSOMAL SUBUNIT PROTEIN UL16M"/>
    <property type="match status" value="1"/>
</dbReference>
<dbReference type="Pfam" id="PF00252">
    <property type="entry name" value="Ribosomal_L16"/>
    <property type="match status" value="1"/>
</dbReference>
<dbReference type="PRINTS" id="PR00060">
    <property type="entry name" value="RIBOSOMALL16"/>
</dbReference>
<dbReference type="SUPFAM" id="SSF54686">
    <property type="entry name" value="Ribosomal protein L16p/L10e"/>
    <property type="match status" value="1"/>
</dbReference>
<dbReference type="PROSITE" id="PS00586">
    <property type="entry name" value="RIBOSOMAL_L16_1"/>
    <property type="match status" value="1"/>
</dbReference>
<accession>B9MB80</accession>
<evidence type="ECO:0000255" key="1">
    <source>
        <dbReference type="HAMAP-Rule" id="MF_01342"/>
    </source>
</evidence>
<evidence type="ECO:0000256" key="2">
    <source>
        <dbReference type="SAM" id="MobiDB-lite"/>
    </source>
</evidence>
<evidence type="ECO:0000305" key="3"/>
<name>RL16_ACIET</name>
<comment type="function">
    <text evidence="1">Binds 23S rRNA and is also seen to make contacts with the A and possibly P site tRNAs.</text>
</comment>
<comment type="subunit">
    <text evidence="1">Part of the 50S ribosomal subunit.</text>
</comment>
<comment type="similarity">
    <text evidence="1">Belongs to the universal ribosomal protein uL16 family.</text>
</comment>
<feature type="chain" id="PRO_1000166356" description="Large ribosomal subunit protein uL16">
    <location>
        <begin position="1"/>
        <end position="138"/>
    </location>
</feature>
<feature type="region of interest" description="Disordered" evidence="2">
    <location>
        <begin position="1"/>
        <end position="22"/>
    </location>
</feature>
<feature type="compositionally biased region" description="Basic residues" evidence="2">
    <location>
        <begin position="1"/>
        <end position="13"/>
    </location>
</feature>
<reference key="1">
    <citation type="submission" date="2009-01" db="EMBL/GenBank/DDBJ databases">
        <title>Complete sequence of Diaphorobacter sp. TPSY.</title>
        <authorList>
            <consortium name="US DOE Joint Genome Institute"/>
            <person name="Lucas S."/>
            <person name="Copeland A."/>
            <person name="Lapidus A."/>
            <person name="Glavina del Rio T."/>
            <person name="Tice H."/>
            <person name="Bruce D."/>
            <person name="Goodwin L."/>
            <person name="Pitluck S."/>
            <person name="Chertkov O."/>
            <person name="Brettin T."/>
            <person name="Detter J.C."/>
            <person name="Han C."/>
            <person name="Larimer F."/>
            <person name="Land M."/>
            <person name="Hauser L."/>
            <person name="Kyrpides N."/>
            <person name="Mikhailova N."/>
            <person name="Coates J.D."/>
        </authorList>
    </citation>
    <scope>NUCLEOTIDE SEQUENCE [LARGE SCALE GENOMIC DNA]</scope>
    <source>
        <strain>TPSY</strain>
    </source>
</reference>
<sequence length="138" mass="15387">MLQPARRKFRKEQKGRNTGVATRGNSVAFGDFGLKCTDRGRLTARQIEAARRAISRHVKRGGRIWIRVFPDKPISTKPAEVRMGNGKGNPEYYVAEIQPGKVVFEIVGVPEELAREAFRLAAAKLPLRTTFVARQIGA</sequence>